<reference key="1">
    <citation type="journal article" date="2016" name="Genome Announc.">
        <title>Complete genome sequence of Alkaliphilus metalliredigens strain QYMF, an alkaliphilic and metal-reducing bacterium isolated from borax-contaminated leachate ponds.</title>
        <authorList>
            <person name="Hwang C."/>
            <person name="Copeland A."/>
            <person name="Lucas S."/>
            <person name="Lapidus A."/>
            <person name="Barry K."/>
            <person name="Detter J.C."/>
            <person name="Glavina Del Rio T."/>
            <person name="Hammon N."/>
            <person name="Israni S."/>
            <person name="Dalin E."/>
            <person name="Tice H."/>
            <person name="Pitluck S."/>
            <person name="Chertkov O."/>
            <person name="Brettin T."/>
            <person name="Bruce D."/>
            <person name="Han C."/>
            <person name="Schmutz J."/>
            <person name="Larimer F."/>
            <person name="Land M.L."/>
            <person name="Hauser L."/>
            <person name="Kyrpides N."/>
            <person name="Mikhailova N."/>
            <person name="Ye Q."/>
            <person name="Zhou J."/>
            <person name="Richardson P."/>
            <person name="Fields M.W."/>
        </authorList>
    </citation>
    <scope>NUCLEOTIDE SEQUENCE [LARGE SCALE GENOMIC DNA]</scope>
    <source>
        <strain>QYMF</strain>
    </source>
</reference>
<protein>
    <recommendedName>
        <fullName evidence="1">ATP-dependent zinc metalloprotease FtsH 1</fullName>
        <ecNumber evidence="1">3.4.24.-</ecNumber>
    </recommendedName>
</protein>
<feature type="chain" id="PRO_5000256654" description="ATP-dependent zinc metalloprotease FtsH 1">
    <location>
        <begin position="1"/>
        <end position="590"/>
    </location>
</feature>
<feature type="topological domain" description="Cytoplasmic" evidence="1">
    <location>
        <begin position="1"/>
        <end position="8"/>
    </location>
</feature>
<feature type="transmembrane region" description="Helical" evidence="1">
    <location>
        <begin position="9"/>
        <end position="29"/>
    </location>
</feature>
<feature type="topological domain" description="Extracellular" evidence="1">
    <location>
        <begin position="30"/>
        <end position="103"/>
    </location>
</feature>
<feature type="transmembrane region" description="Helical" evidence="1">
    <location>
        <begin position="104"/>
        <end position="124"/>
    </location>
</feature>
<feature type="topological domain" description="Cytoplasmic" evidence="1">
    <location>
        <begin position="125"/>
        <end position="590"/>
    </location>
</feature>
<feature type="active site" evidence="1">
    <location>
        <position position="419"/>
    </location>
</feature>
<feature type="binding site" evidence="1">
    <location>
        <begin position="195"/>
        <end position="202"/>
    </location>
    <ligand>
        <name>ATP</name>
        <dbReference type="ChEBI" id="CHEBI:30616"/>
    </ligand>
</feature>
<feature type="binding site" evidence="1">
    <location>
        <position position="418"/>
    </location>
    <ligand>
        <name>Zn(2+)</name>
        <dbReference type="ChEBI" id="CHEBI:29105"/>
        <note>catalytic</note>
    </ligand>
</feature>
<feature type="binding site" evidence="1">
    <location>
        <position position="422"/>
    </location>
    <ligand>
        <name>Zn(2+)</name>
        <dbReference type="ChEBI" id="CHEBI:29105"/>
        <note>catalytic</note>
    </ligand>
</feature>
<feature type="binding site" evidence="1">
    <location>
        <position position="496"/>
    </location>
    <ligand>
        <name>Zn(2+)</name>
        <dbReference type="ChEBI" id="CHEBI:29105"/>
        <note>catalytic</note>
    </ligand>
</feature>
<organism>
    <name type="scientific">Alkaliphilus metalliredigens (strain QYMF)</name>
    <dbReference type="NCBI Taxonomy" id="293826"/>
    <lineage>
        <taxon>Bacteria</taxon>
        <taxon>Bacillati</taxon>
        <taxon>Bacillota</taxon>
        <taxon>Clostridia</taxon>
        <taxon>Peptostreptococcales</taxon>
        <taxon>Natronincolaceae</taxon>
        <taxon>Alkaliphilus</taxon>
    </lineage>
</organism>
<gene>
    <name evidence="1" type="primary">ftsH1</name>
    <name type="ordered locus">Amet_3170</name>
</gene>
<keyword id="KW-0067">ATP-binding</keyword>
<keyword id="KW-1003">Cell membrane</keyword>
<keyword id="KW-0378">Hydrolase</keyword>
<keyword id="KW-0472">Membrane</keyword>
<keyword id="KW-0479">Metal-binding</keyword>
<keyword id="KW-0482">Metalloprotease</keyword>
<keyword id="KW-0547">Nucleotide-binding</keyword>
<keyword id="KW-0645">Protease</keyword>
<keyword id="KW-1185">Reference proteome</keyword>
<keyword id="KW-0812">Transmembrane</keyword>
<keyword id="KW-1133">Transmembrane helix</keyword>
<keyword id="KW-0862">Zinc</keyword>
<name>FTSH1_ALKMQ</name>
<sequence length="590" mass="65095">MLKLTKKQLIIVLGIAIVVVSAIGYAVYTQYFNEDKLEISYTAFLESTEAGEIRTVNLSEGPKLTGVFEDGKQFITDHPRTDSLKENLLLHGIQVRETTDQYSVVQVITFVVLIGGFIGVAIFLSKKNATQTSKEYDKMSDVEFSTQKDSSIRFADIAGNQEAKENAMELVDFLKNPEKYSRYGAKMPKGVILYGSPGTGKTLLARALASEAGVEFLAVSGSDFVQVYAGLGAGRIRNLFKKAKDKGKCVIFIDEIDAIGKKRDRGGLGGSDESDRTLNALLTEMSGFKGSEGIIVMAATNRLDILDDALLRPGRFDRQIEIGLPDLKARQDILQLYTQNRPIDPKVCLRGIAQQTVYFSGAKLENLMNEAAIYAAREEADFITEGHIDKAFYTVVAGEEKKDRSNIQPIDRKITAYHEAGHAVATKLLCPQNKVTKVTIIPSTKGAGGFSMNIPPDQMYHTKNSMVNSIKVALSGRIIEEIVFGPDFVTTGASNDIQKATEILGAMIKQFGMNDEVGMINYDVLFGRQGACDQRVMELTKLNMKRLYDETKVLLEKSLNIVEAVAEDLLIKETLKEDEINEIFSGFQSM</sequence>
<proteinExistence type="inferred from homology"/>
<evidence type="ECO:0000255" key="1">
    <source>
        <dbReference type="HAMAP-Rule" id="MF_01458"/>
    </source>
</evidence>
<accession>A6TSZ1</accession>
<comment type="function">
    <text evidence="1">Acts as a processive, ATP-dependent zinc metallopeptidase for both cytoplasmic and membrane proteins. Plays a role in the quality control of integral membrane proteins.</text>
</comment>
<comment type="cofactor">
    <cofactor evidence="1">
        <name>Zn(2+)</name>
        <dbReference type="ChEBI" id="CHEBI:29105"/>
    </cofactor>
    <text evidence="1">Binds 1 zinc ion per subunit.</text>
</comment>
<comment type="subunit">
    <text evidence="1">Homohexamer.</text>
</comment>
<comment type="subcellular location">
    <subcellularLocation>
        <location evidence="1">Cell membrane</location>
        <topology evidence="1">Multi-pass membrane protein</topology>
        <orientation evidence="1">Cytoplasmic side</orientation>
    </subcellularLocation>
</comment>
<comment type="similarity">
    <text evidence="1">In the central section; belongs to the AAA ATPase family.</text>
</comment>
<comment type="similarity">
    <text evidence="1">In the C-terminal section; belongs to the peptidase M41 family.</text>
</comment>
<dbReference type="EC" id="3.4.24.-" evidence="1"/>
<dbReference type="EMBL" id="CP000724">
    <property type="protein sequence ID" value="ABR49309.1"/>
    <property type="molecule type" value="Genomic_DNA"/>
</dbReference>
<dbReference type="RefSeq" id="WP_012064275.1">
    <property type="nucleotide sequence ID" value="NC_009633.1"/>
</dbReference>
<dbReference type="SMR" id="A6TSZ1"/>
<dbReference type="STRING" id="293826.Amet_3170"/>
<dbReference type="KEGG" id="amt:Amet_3170"/>
<dbReference type="eggNOG" id="COG0465">
    <property type="taxonomic scope" value="Bacteria"/>
</dbReference>
<dbReference type="HOGENOM" id="CLU_000688_16_2_9"/>
<dbReference type="OrthoDB" id="9809379at2"/>
<dbReference type="Proteomes" id="UP000001572">
    <property type="component" value="Chromosome"/>
</dbReference>
<dbReference type="GO" id="GO:0005886">
    <property type="term" value="C:plasma membrane"/>
    <property type="evidence" value="ECO:0007669"/>
    <property type="project" value="UniProtKB-SubCell"/>
</dbReference>
<dbReference type="GO" id="GO:0005524">
    <property type="term" value="F:ATP binding"/>
    <property type="evidence" value="ECO:0007669"/>
    <property type="project" value="UniProtKB-UniRule"/>
</dbReference>
<dbReference type="GO" id="GO:0016887">
    <property type="term" value="F:ATP hydrolysis activity"/>
    <property type="evidence" value="ECO:0007669"/>
    <property type="project" value="UniProtKB-UniRule"/>
</dbReference>
<dbReference type="GO" id="GO:0004176">
    <property type="term" value="F:ATP-dependent peptidase activity"/>
    <property type="evidence" value="ECO:0007669"/>
    <property type="project" value="InterPro"/>
</dbReference>
<dbReference type="GO" id="GO:0004222">
    <property type="term" value="F:metalloendopeptidase activity"/>
    <property type="evidence" value="ECO:0007669"/>
    <property type="project" value="InterPro"/>
</dbReference>
<dbReference type="GO" id="GO:0008270">
    <property type="term" value="F:zinc ion binding"/>
    <property type="evidence" value="ECO:0007669"/>
    <property type="project" value="UniProtKB-UniRule"/>
</dbReference>
<dbReference type="GO" id="GO:0030163">
    <property type="term" value="P:protein catabolic process"/>
    <property type="evidence" value="ECO:0007669"/>
    <property type="project" value="UniProtKB-UniRule"/>
</dbReference>
<dbReference type="GO" id="GO:0006508">
    <property type="term" value="P:proteolysis"/>
    <property type="evidence" value="ECO:0007669"/>
    <property type="project" value="UniProtKB-KW"/>
</dbReference>
<dbReference type="CDD" id="cd19501">
    <property type="entry name" value="RecA-like_FtsH"/>
    <property type="match status" value="1"/>
</dbReference>
<dbReference type="FunFam" id="1.10.8.60:FF:000001">
    <property type="entry name" value="ATP-dependent zinc metalloprotease FtsH"/>
    <property type="match status" value="1"/>
</dbReference>
<dbReference type="FunFam" id="3.40.50.300:FF:000001">
    <property type="entry name" value="ATP-dependent zinc metalloprotease FtsH"/>
    <property type="match status" value="1"/>
</dbReference>
<dbReference type="Gene3D" id="1.10.8.60">
    <property type="match status" value="1"/>
</dbReference>
<dbReference type="Gene3D" id="3.30.720.210">
    <property type="match status" value="1"/>
</dbReference>
<dbReference type="Gene3D" id="3.40.50.300">
    <property type="entry name" value="P-loop containing nucleotide triphosphate hydrolases"/>
    <property type="match status" value="1"/>
</dbReference>
<dbReference type="Gene3D" id="1.20.58.760">
    <property type="entry name" value="Peptidase M41"/>
    <property type="match status" value="1"/>
</dbReference>
<dbReference type="HAMAP" id="MF_01458">
    <property type="entry name" value="FtsH"/>
    <property type="match status" value="1"/>
</dbReference>
<dbReference type="InterPro" id="IPR003593">
    <property type="entry name" value="AAA+_ATPase"/>
</dbReference>
<dbReference type="InterPro" id="IPR041569">
    <property type="entry name" value="AAA_lid_3"/>
</dbReference>
<dbReference type="InterPro" id="IPR003959">
    <property type="entry name" value="ATPase_AAA_core"/>
</dbReference>
<dbReference type="InterPro" id="IPR003960">
    <property type="entry name" value="ATPase_AAA_CS"/>
</dbReference>
<dbReference type="InterPro" id="IPR005936">
    <property type="entry name" value="FtsH"/>
</dbReference>
<dbReference type="InterPro" id="IPR027417">
    <property type="entry name" value="P-loop_NTPase"/>
</dbReference>
<dbReference type="InterPro" id="IPR000642">
    <property type="entry name" value="Peptidase_M41"/>
</dbReference>
<dbReference type="InterPro" id="IPR037219">
    <property type="entry name" value="Peptidase_M41-like"/>
</dbReference>
<dbReference type="PANTHER" id="PTHR23076:SF97">
    <property type="entry name" value="ATP-DEPENDENT ZINC METALLOPROTEASE YME1L1"/>
    <property type="match status" value="1"/>
</dbReference>
<dbReference type="PANTHER" id="PTHR23076">
    <property type="entry name" value="METALLOPROTEASE M41 FTSH"/>
    <property type="match status" value="1"/>
</dbReference>
<dbReference type="Pfam" id="PF00004">
    <property type="entry name" value="AAA"/>
    <property type="match status" value="1"/>
</dbReference>
<dbReference type="Pfam" id="PF17862">
    <property type="entry name" value="AAA_lid_3"/>
    <property type="match status" value="1"/>
</dbReference>
<dbReference type="Pfam" id="PF01434">
    <property type="entry name" value="Peptidase_M41"/>
    <property type="match status" value="1"/>
</dbReference>
<dbReference type="SMART" id="SM00382">
    <property type="entry name" value="AAA"/>
    <property type="match status" value="1"/>
</dbReference>
<dbReference type="SUPFAM" id="SSF140990">
    <property type="entry name" value="FtsH protease domain-like"/>
    <property type="match status" value="1"/>
</dbReference>
<dbReference type="SUPFAM" id="SSF52540">
    <property type="entry name" value="P-loop containing nucleoside triphosphate hydrolases"/>
    <property type="match status" value="1"/>
</dbReference>
<dbReference type="PROSITE" id="PS00674">
    <property type="entry name" value="AAA"/>
    <property type="match status" value="1"/>
</dbReference>